<accession>A3D595</accession>
<proteinExistence type="inferred from homology"/>
<organism>
    <name type="scientific">Shewanella baltica (strain OS155 / ATCC BAA-1091)</name>
    <dbReference type="NCBI Taxonomy" id="325240"/>
    <lineage>
        <taxon>Bacteria</taxon>
        <taxon>Pseudomonadati</taxon>
        <taxon>Pseudomonadota</taxon>
        <taxon>Gammaproteobacteria</taxon>
        <taxon>Alteromonadales</taxon>
        <taxon>Shewanellaceae</taxon>
        <taxon>Shewanella</taxon>
    </lineage>
</organism>
<comment type="similarity">
    <text evidence="1">Belongs to the UPF0227 family.</text>
</comment>
<gene>
    <name type="ordered locus">Sbal_2415</name>
</gene>
<keyword id="KW-1185">Reference proteome</keyword>
<evidence type="ECO:0000255" key="1">
    <source>
        <dbReference type="HAMAP-Rule" id="MF_01047"/>
    </source>
</evidence>
<dbReference type="EMBL" id="CP000563">
    <property type="protein sequence ID" value="ABN61908.1"/>
    <property type="molecule type" value="Genomic_DNA"/>
</dbReference>
<dbReference type="RefSeq" id="WP_011846961.1">
    <property type="nucleotide sequence ID" value="NC_009052.1"/>
</dbReference>
<dbReference type="SMR" id="A3D595"/>
<dbReference type="STRING" id="325240.Sbal_2415"/>
<dbReference type="ESTHER" id="sheb2-y1944">
    <property type="family name" value="abh_upf00227"/>
</dbReference>
<dbReference type="KEGG" id="sbl:Sbal_2415"/>
<dbReference type="HOGENOM" id="CLU_128769_0_0_6"/>
<dbReference type="OrthoDB" id="6469735at2"/>
<dbReference type="Proteomes" id="UP000001557">
    <property type="component" value="Chromosome"/>
</dbReference>
<dbReference type="Gene3D" id="3.40.50.1820">
    <property type="entry name" value="alpha/beta hydrolase"/>
    <property type="match status" value="1"/>
</dbReference>
<dbReference type="HAMAP" id="MF_01047">
    <property type="entry name" value="UPF0227"/>
    <property type="match status" value="1"/>
</dbReference>
<dbReference type="InterPro" id="IPR029058">
    <property type="entry name" value="AB_hydrolase_fold"/>
</dbReference>
<dbReference type="InterPro" id="IPR022987">
    <property type="entry name" value="UPF0227"/>
</dbReference>
<dbReference type="InterPro" id="IPR008886">
    <property type="entry name" value="UPF0227/Esterase_YqiA"/>
</dbReference>
<dbReference type="NCBIfam" id="NF003431">
    <property type="entry name" value="PRK04940.1"/>
    <property type="match status" value="1"/>
</dbReference>
<dbReference type="PANTHER" id="PTHR35602">
    <property type="entry name" value="ESTERASE YQIA-RELATED"/>
    <property type="match status" value="1"/>
</dbReference>
<dbReference type="PANTHER" id="PTHR35602:SF2">
    <property type="entry name" value="UPF0227 PROTEIN YCFP"/>
    <property type="match status" value="1"/>
</dbReference>
<dbReference type="Pfam" id="PF05728">
    <property type="entry name" value="UPF0227"/>
    <property type="match status" value="1"/>
</dbReference>
<reference key="1">
    <citation type="submission" date="2007-02" db="EMBL/GenBank/DDBJ databases">
        <title>Complete sequence of chromosome of Shewanella baltica OS155.</title>
        <authorList>
            <consortium name="US DOE Joint Genome Institute"/>
            <person name="Copeland A."/>
            <person name="Lucas S."/>
            <person name="Lapidus A."/>
            <person name="Barry K."/>
            <person name="Detter J.C."/>
            <person name="Glavina del Rio T."/>
            <person name="Hammon N."/>
            <person name="Israni S."/>
            <person name="Dalin E."/>
            <person name="Tice H."/>
            <person name="Pitluck S."/>
            <person name="Sims D.R."/>
            <person name="Brettin T."/>
            <person name="Bruce D."/>
            <person name="Han C."/>
            <person name="Tapia R."/>
            <person name="Brainard J."/>
            <person name="Schmutz J."/>
            <person name="Larimer F."/>
            <person name="Land M."/>
            <person name="Hauser L."/>
            <person name="Kyrpides N."/>
            <person name="Mikhailova N."/>
            <person name="Brettar I."/>
            <person name="Klappenbach J."/>
            <person name="Konstantinidis K."/>
            <person name="Rodrigues J."/>
            <person name="Tiedje J."/>
            <person name="Richardson P."/>
        </authorList>
    </citation>
    <scope>NUCLEOTIDE SEQUENCE [LARGE SCALE GENOMIC DNA]</scope>
    <source>
        <strain>OS155 / ATCC BAA-1091</strain>
    </source>
</reference>
<name>Y2415_SHEB5</name>
<sequence length="179" mass="20520">MIFYLHGFDATSPGNHEKMRQLQFIDPDVRLVSYSTLHPKHDMQHLLKEVAKQMKHSDDPAPLMVGVGLGAYWAERIGFLNGLKSVLINPNLHPEENMQGKIDRPEEYADIANKCVSQFREKNTHKAMCIFSVNDEMFDNQQLASELSAYYSIDWDDVQPHKFPQLAAHLPKIKAFKLA</sequence>
<protein>
    <recommendedName>
        <fullName evidence="1">UPF0227 protein Sbal_2415</fullName>
    </recommendedName>
</protein>
<feature type="chain" id="PRO_1000064296" description="UPF0227 protein Sbal_2415">
    <location>
        <begin position="1"/>
        <end position="179"/>
    </location>
</feature>